<gene>
    <name evidence="1" type="primary">infC</name>
    <name type="ordered locus">Oant_0803</name>
</gene>
<organism>
    <name type="scientific">Brucella anthropi (strain ATCC 49188 / DSM 6882 / CCUG 24695 / JCM 21032 / LMG 3331 / NBRC 15819 / NCTC 12168 / Alc 37)</name>
    <name type="common">Ochrobactrum anthropi</name>
    <dbReference type="NCBI Taxonomy" id="439375"/>
    <lineage>
        <taxon>Bacteria</taxon>
        <taxon>Pseudomonadati</taxon>
        <taxon>Pseudomonadota</taxon>
        <taxon>Alphaproteobacteria</taxon>
        <taxon>Hyphomicrobiales</taxon>
        <taxon>Brucellaceae</taxon>
        <taxon>Brucella/Ochrobactrum group</taxon>
        <taxon>Brucella</taxon>
    </lineage>
</organism>
<dbReference type="EMBL" id="CP000758">
    <property type="protein sequence ID" value="ABS13525.1"/>
    <property type="molecule type" value="Genomic_DNA"/>
</dbReference>
<dbReference type="RefSeq" id="WP_012091035.1">
    <property type="nucleotide sequence ID" value="NC_009667.1"/>
</dbReference>
<dbReference type="SMR" id="A6WX21"/>
<dbReference type="STRING" id="439375.Oant_0803"/>
<dbReference type="KEGG" id="oan:Oant_0803"/>
<dbReference type="eggNOG" id="COG0290">
    <property type="taxonomic scope" value="Bacteria"/>
</dbReference>
<dbReference type="HOGENOM" id="CLU_054919_3_2_5"/>
<dbReference type="Proteomes" id="UP000002301">
    <property type="component" value="Chromosome 1"/>
</dbReference>
<dbReference type="GO" id="GO:0005829">
    <property type="term" value="C:cytosol"/>
    <property type="evidence" value="ECO:0007669"/>
    <property type="project" value="TreeGrafter"/>
</dbReference>
<dbReference type="GO" id="GO:0016020">
    <property type="term" value="C:membrane"/>
    <property type="evidence" value="ECO:0007669"/>
    <property type="project" value="TreeGrafter"/>
</dbReference>
<dbReference type="GO" id="GO:0043022">
    <property type="term" value="F:ribosome binding"/>
    <property type="evidence" value="ECO:0007669"/>
    <property type="project" value="TreeGrafter"/>
</dbReference>
<dbReference type="GO" id="GO:0003743">
    <property type="term" value="F:translation initiation factor activity"/>
    <property type="evidence" value="ECO:0007669"/>
    <property type="project" value="UniProtKB-UniRule"/>
</dbReference>
<dbReference type="GO" id="GO:0032790">
    <property type="term" value="P:ribosome disassembly"/>
    <property type="evidence" value="ECO:0007669"/>
    <property type="project" value="TreeGrafter"/>
</dbReference>
<dbReference type="FunFam" id="3.30.110.10:FF:000001">
    <property type="entry name" value="Translation initiation factor IF-3"/>
    <property type="match status" value="1"/>
</dbReference>
<dbReference type="Gene3D" id="3.30.110.10">
    <property type="entry name" value="Translation initiation factor 3 (IF-3), C-terminal domain"/>
    <property type="match status" value="1"/>
</dbReference>
<dbReference type="Gene3D" id="3.10.20.80">
    <property type="entry name" value="Translation initiation factor 3 (IF-3), N-terminal domain"/>
    <property type="match status" value="1"/>
</dbReference>
<dbReference type="HAMAP" id="MF_00080">
    <property type="entry name" value="IF_3"/>
    <property type="match status" value="1"/>
</dbReference>
<dbReference type="InterPro" id="IPR036788">
    <property type="entry name" value="T_IF-3_C_sf"/>
</dbReference>
<dbReference type="InterPro" id="IPR036787">
    <property type="entry name" value="T_IF-3_N_sf"/>
</dbReference>
<dbReference type="InterPro" id="IPR001288">
    <property type="entry name" value="Translation_initiation_fac_3"/>
</dbReference>
<dbReference type="InterPro" id="IPR019815">
    <property type="entry name" value="Translation_initiation_fac_3_C"/>
</dbReference>
<dbReference type="InterPro" id="IPR019814">
    <property type="entry name" value="Translation_initiation_fac_3_N"/>
</dbReference>
<dbReference type="NCBIfam" id="TIGR00168">
    <property type="entry name" value="infC"/>
    <property type="match status" value="1"/>
</dbReference>
<dbReference type="PANTHER" id="PTHR10938">
    <property type="entry name" value="TRANSLATION INITIATION FACTOR IF-3"/>
    <property type="match status" value="1"/>
</dbReference>
<dbReference type="PANTHER" id="PTHR10938:SF0">
    <property type="entry name" value="TRANSLATION INITIATION FACTOR IF-3, MITOCHONDRIAL"/>
    <property type="match status" value="1"/>
</dbReference>
<dbReference type="Pfam" id="PF00707">
    <property type="entry name" value="IF3_C"/>
    <property type="match status" value="1"/>
</dbReference>
<dbReference type="Pfam" id="PF05198">
    <property type="entry name" value="IF3_N"/>
    <property type="match status" value="1"/>
</dbReference>
<dbReference type="SUPFAM" id="SSF55200">
    <property type="entry name" value="Translation initiation factor IF3, C-terminal domain"/>
    <property type="match status" value="1"/>
</dbReference>
<dbReference type="SUPFAM" id="SSF54364">
    <property type="entry name" value="Translation initiation factor IF3, N-terminal domain"/>
    <property type="match status" value="1"/>
</dbReference>
<keyword id="KW-0963">Cytoplasm</keyword>
<keyword id="KW-0396">Initiation factor</keyword>
<keyword id="KW-0648">Protein biosynthesis</keyword>
<keyword id="KW-1185">Reference proteome</keyword>
<proteinExistence type="inferred from homology"/>
<protein>
    <recommendedName>
        <fullName evidence="1">Translation initiation factor IF-3</fullName>
    </recommendedName>
</protein>
<feature type="chain" id="PRO_1000004549" description="Translation initiation factor IF-3">
    <location>
        <begin position="1"/>
        <end position="178"/>
    </location>
</feature>
<feature type="region of interest" description="Disordered" evidence="2">
    <location>
        <begin position="1"/>
        <end position="20"/>
    </location>
</feature>
<reference key="1">
    <citation type="journal article" date="2011" name="J. Bacteriol.">
        <title>Genome of Ochrobactrum anthropi ATCC 49188 T, a versatile opportunistic pathogen and symbiont of several eukaryotic hosts.</title>
        <authorList>
            <person name="Chain P.S."/>
            <person name="Lang D.M."/>
            <person name="Comerci D.J."/>
            <person name="Malfatti S.A."/>
            <person name="Vergez L.M."/>
            <person name="Shin M."/>
            <person name="Ugalde R.A."/>
            <person name="Garcia E."/>
            <person name="Tolmasky M.E."/>
        </authorList>
    </citation>
    <scope>NUCLEOTIDE SEQUENCE [LARGE SCALE GENOMIC DNA]</scope>
    <source>
        <strain>ATCC 49188 / DSM 6882 / CCUG 24695 / JCM 21032 / LMG 3331 / NBRC 15819 / NCTC 12168 / Alc 37</strain>
    </source>
</reference>
<comment type="function">
    <text evidence="1">IF-3 binds to the 30S ribosomal subunit and shifts the equilibrium between 70S ribosomes and their 50S and 30S subunits in favor of the free subunits, thus enhancing the availability of 30S subunits on which protein synthesis initiation begins.</text>
</comment>
<comment type="subunit">
    <text evidence="1">Monomer.</text>
</comment>
<comment type="subcellular location">
    <subcellularLocation>
        <location evidence="1">Cytoplasm</location>
    </subcellularLocation>
</comment>
<comment type="similarity">
    <text evidence="1">Belongs to the IF-3 family.</text>
</comment>
<evidence type="ECO:0000255" key="1">
    <source>
        <dbReference type="HAMAP-Rule" id="MF_00080"/>
    </source>
</evidence>
<evidence type="ECO:0000256" key="2">
    <source>
        <dbReference type="SAM" id="MobiDB-lite"/>
    </source>
</evidence>
<accession>A6WX21</accession>
<name>IF3_BRUA4</name>
<sequence length="178" mass="20412">MRRPFRATPVQKDGPRSNRDIRVPRVQLIDAEGQNHGDVSIQEAIAMAEEAGLDLVEIVPNAEPPVCKIVDLGKLKYQNQKKAAEARKKQKTVEIKEIKMRPNIDTHDYEVKMKAALRFFEEGDKVKVTLRFRGREMAHQELGMKLLQRVKEDTVEIAKVESEPKLEGRQMMMVLAPR</sequence>